<reference key="1">
    <citation type="journal article" date="2004" name="Nature">
        <title>Genome evolution in yeasts.</title>
        <authorList>
            <person name="Dujon B."/>
            <person name="Sherman D."/>
            <person name="Fischer G."/>
            <person name="Durrens P."/>
            <person name="Casaregola S."/>
            <person name="Lafontaine I."/>
            <person name="de Montigny J."/>
            <person name="Marck C."/>
            <person name="Neuveglise C."/>
            <person name="Talla E."/>
            <person name="Goffard N."/>
            <person name="Frangeul L."/>
            <person name="Aigle M."/>
            <person name="Anthouard V."/>
            <person name="Babour A."/>
            <person name="Barbe V."/>
            <person name="Barnay S."/>
            <person name="Blanchin S."/>
            <person name="Beckerich J.-M."/>
            <person name="Beyne E."/>
            <person name="Bleykasten C."/>
            <person name="Boisrame A."/>
            <person name="Boyer J."/>
            <person name="Cattolico L."/>
            <person name="Confanioleri F."/>
            <person name="de Daruvar A."/>
            <person name="Despons L."/>
            <person name="Fabre E."/>
            <person name="Fairhead C."/>
            <person name="Ferry-Dumazet H."/>
            <person name="Groppi A."/>
            <person name="Hantraye F."/>
            <person name="Hennequin C."/>
            <person name="Jauniaux N."/>
            <person name="Joyet P."/>
            <person name="Kachouri R."/>
            <person name="Kerrest A."/>
            <person name="Koszul R."/>
            <person name="Lemaire M."/>
            <person name="Lesur I."/>
            <person name="Ma L."/>
            <person name="Muller H."/>
            <person name="Nicaud J.-M."/>
            <person name="Nikolski M."/>
            <person name="Oztas S."/>
            <person name="Ozier-Kalogeropoulos O."/>
            <person name="Pellenz S."/>
            <person name="Potier S."/>
            <person name="Richard G.-F."/>
            <person name="Straub M.-L."/>
            <person name="Suleau A."/>
            <person name="Swennen D."/>
            <person name="Tekaia F."/>
            <person name="Wesolowski-Louvel M."/>
            <person name="Westhof E."/>
            <person name="Wirth B."/>
            <person name="Zeniou-Meyer M."/>
            <person name="Zivanovic Y."/>
            <person name="Bolotin-Fukuhara M."/>
            <person name="Thierry A."/>
            <person name="Bouchier C."/>
            <person name="Caudron B."/>
            <person name="Scarpelli C."/>
            <person name="Gaillardin C."/>
            <person name="Weissenbach J."/>
            <person name="Wincker P."/>
            <person name="Souciet J.-L."/>
        </authorList>
    </citation>
    <scope>NUCLEOTIDE SEQUENCE [LARGE SCALE GENOMIC DNA]</scope>
    <source>
        <strain>CLIB 122 / E 150</strain>
    </source>
</reference>
<comment type="function">
    <text evidence="1">DNA-binding protein that induces severe bending of DNA. Required for DNA-binding by the FACT complex, a general chromatin factor that acts to reorganize nucleosomes. The FACT complex is involved in multiple processes that require DNA as a template such as mRNA elongation, DNA replication and DNA repair. Also augments the fidelity of transcription by RNA polymerase III independently of any role in the FACT complex (By similarity).</text>
</comment>
<comment type="subunit">
    <text evidence="1">Weakly associates with the stable SPT16-POB3 heterodimer to form the FACT complex.</text>
</comment>
<comment type="subcellular location">
    <subcellularLocation>
        <location evidence="2">Nucleus</location>
    </subcellularLocation>
    <subcellularLocation>
        <location evidence="1">Chromosome</location>
    </subcellularLocation>
</comment>
<comment type="similarity">
    <text evidence="4">Belongs to the NHP6 family.</text>
</comment>
<protein>
    <recommendedName>
        <fullName>Non-histone chromosomal protein 6</fullName>
    </recommendedName>
</protein>
<dbReference type="EMBL" id="CR382129">
    <property type="protein sequence ID" value="CAG82043.1"/>
    <property type="molecule type" value="Genomic_DNA"/>
</dbReference>
<dbReference type="RefSeq" id="XP_501733.1">
    <property type="nucleotide sequence ID" value="XM_501733.1"/>
</dbReference>
<dbReference type="SMR" id="Q6CC79"/>
<dbReference type="FunCoup" id="Q6CC79">
    <property type="interactions" value="454"/>
</dbReference>
<dbReference type="STRING" id="284591.Q6CC79"/>
<dbReference type="EnsemblFungi" id="CAG82043">
    <property type="protein sequence ID" value="CAG82043"/>
    <property type="gene ID" value="YALI0_C11671g"/>
</dbReference>
<dbReference type="KEGG" id="yli:2909264"/>
<dbReference type="VEuPathDB" id="FungiDB:YALI0_C11671g"/>
<dbReference type="HOGENOM" id="CLU_082854_10_1_1"/>
<dbReference type="InParanoid" id="Q6CC79"/>
<dbReference type="OMA" id="MKNMGGK"/>
<dbReference type="OrthoDB" id="122063at4891"/>
<dbReference type="Proteomes" id="UP000001300">
    <property type="component" value="Chromosome C"/>
</dbReference>
<dbReference type="GO" id="GO:0005694">
    <property type="term" value="C:chromosome"/>
    <property type="evidence" value="ECO:0007669"/>
    <property type="project" value="UniProtKB-SubCell"/>
</dbReference>
<dbReference type="GO" id="GO:0005634">
    <property type="term" value="C:nucleus"/>
    <property type="evidence" value="ECO:0007669"/>
    <property type="project" value="UniProtKB-SubCell"/>
</dbReference>
<dbReference type="GO" id="GO:0003677">
    <property type="term" value="F:DNA binding"/>
    <property type="evidence" value="ECO:0007669"/>
    <property type="project" value="UniProtKB-KW"/>
</dbReference>
<dbReference type="GO" id="GO:0006281">
    <property type="term" value="P:DNA repair"/>
    <property type="evidence" value="ECO:0007669"/>
    <property type="project" value="UniProtKB-KW"/>
</dbReference>
<dbReference type="CDD" id="cd01390">
    <property type="entry name" value="HMG-box_NHP6-like"/>
    <property type="match status" value="1"/>
</dbReference>
<dbReference type="FunFam" id="1.10.30.10:FF:000016">
    <property type="entry name" value="FACT complex subunit SSRP1"/>
    <property type="match status" value="1"/>
</dbReference>
<dbReference type="Gene3D" id="1.10.30.10">
    <property type="entry name" value="High mobility group box domain"/>
    <property type="match status" value="1"/>
</dbReference>
<dbReference type="InterPro" id="IPR009071">
    <property type="entry name" value="HMG_box_dom"/>
</dbReference>
<dbReference type="InterPro" id="IPR036910">
    <property type="entry name" value="HMG_box_dom_sf"/>
</dbReference>
<dbReference type="InterPro" id="IPR050342">
    <property type="entry name" value="HMGB"/>
</dbReference>
<dbReference type="PANTHER" id="PTHR48112">
    <property type="entry name" value="HIGH MOBILITY GROUP PROTEIN DSP1"/>
    <property type="match status" value="1"/>
</dbReference>
<dbReference type="PANTHER" id="PTHR48112:SF22">
    <property type="entry name" value="MITOCHONDRIAL TRANSCRIPTION FACTOR A, ISOFORM B"/>
    <property type="match status" value="1"/>
</dbReference>
<dbReference type="Pfam" id="PF00505">
    <property type="entry name" value="HMG_box"/>
    <property type="match status" value="1"/>
</dbReference>
<dbReference type="PRINTS" id="PR00886">
    <property type="entry name" value="HIGHMOBLTY12"/>
</dbReference>
<dbReference type="SMART" id="SM00398">
    <property type="entry name" value="HMG"/>
    <property type="match status" value="1"/>
</dbReference>
<dbReference type="SUPFAM" id="SSF47095">
    <property type="entry name" value="HMG-box"/>
    <property type="match status" value="1"/>
</dbReference>
<dbReference type="PROSITE" id="PS50118">
    <property type="entry name" value="HMG_BOX_2"/>
    <property type="match status" value="1"/>
</dbReference>
<sequence length="103" mass="11570">MPKDASAPRRTRKTTGKKKKDPNAPKRALSAYMFFANDNRDAIRADNPGIAFGQVGKALGEKWKTLTDAEKVPYEEKATADKKRYEDEKAAYKANAAEFDEEE</sequence>
<gene>
    <name type="primary">NHP6</name>
    <name type="ordered locus">YALI0C11671g</name>
</gene>
<accession>Q6CC79</accession>
<proteinExistence type="inferred from homology"/>
<evidence type="ECO:0000250" key="1"/>
<evidence type="ECO:0000255" key="2">
    <source>
        <dbReference type="PROSITE-ProRule" id="PRU00267"/>
    </source>
</evidence>
<evidence type="ECO:0000256" key="3">
    <source>
        <dbReference type="SAM" id="MobiDB-lite"/>
    </source>
</evidence>
<evidence type="ECO:0000305" key="4"/>
<organism>
    <name type="scientific">Yarrowia lipolytica (strain CLIB 122 / E 150)</name>
    <name type="common">Yeast</name>
    <name type="synonym">Candida lipolytica</name>
    <dbReference type="NCBI Taxonomy" id="284591"/>
    <lineage>
        <taxon>Eukaryota</taxon>
        <taxon>Fungi</taxon>
        <taxon>Dikarya</taxon>
        <taxon>Ascomycota</taxon>
        <taxon>Saccharomycotina</taxon>
        <taxon>Dipodascomycetes</taxon>
        <taxon>Dipodascales</taxon>
        <taxon>Dipodascales incertae sedis</taxon>
        <taxon>Yarrowia</taxon>
    </lineage>
</organism>
<name>NHP6_YARLI</name>
<feature type="chain" id="PRO_0000245224" description="Non-histone chromosomal protein 6">
    <location>
        <begin position="1"/>
        <end position="103"/>
    </location>
</feature>
<feature type="DNA-binding region" description="HMG box" evidence="2">
    <location>
        <begin position="25"/>
        <end position="93"/>
    </location>
</feature>
<feature type="region of interest" description="Disordered" evidence="3">
    <location>
        <begin position="1"/>
        <end position="27"/>
    </location>
</feature>
<feature type="compositionally biased region" description="Basic residues" evidence="3">
    <location>
        <begin position="9"/>
        <end position="20"/>
    </location>
</feature>
<keyword id="KW-0158">Chromosome</keyword>
<keyword id="KW-0227">DNA damage</keyword>
<keyword id="KW-0234">DNA repair</keyword>
<keyword id="KW-0238">DNA-binding</keyword>
<keyword id="KW-0539">Nucleus</keyword>
<keyword id="KW-1185">Reference proteome</keyword>
<keyword id="KW-0804">Transcription</keyword>
<keyword id="KW-0805">Transcription regulation</keyword>